<feature type="signal peptide" evidence="3">
    <location>
        <begin position="1"/>
        <end position="27"/>
    </location>
</feature>
<feature type="chain" id="PRO_0000340239" description="Trehalase">
    <location>
        <begin position="28"/>
        <end position="594"/>
    </location>
</feature>
<feature type="active site" description="Proton donor/acceptor" evidence="2">
    <location>
        <position position="348"/>
    </location>
</feature>
<feature type="active site" description="Proton donor/acceptor" evidence="2">
    <location>
        <position position="549"/>
    </location>
</feature>
<feature type="binding site" evidence="2">
    <location>
        <position position="190"/>
    </location>
    <ligand>
        <name>substrate</name>
    </ligand>
</feature>
<feature type="binding site" evidence="2">
    <location>
        <begin position="197"/>
        <end position="198"/>
    </location>
    <ligand>
        <name>substrate</name>
    </ligand>
</feature>
<feature type="binding site" evidence="2">
    <location>
        <position position="234"/>
    </location>
    <ligand>
        <name>substrate</name>
    </ligand>
</feature>
<feature type="binding site" evidence="2">
    <location>
        <begin position="243"/>
        <end position="245"/>
    </location>
    <ligand>
        <name>substrate</name>
    </ligand>
</feature>
<feature type="binding site" evidence="2">
    <location>
        <begin position="312"/>
        <end position="314"/>
    </location>
    <ligand>
        <name>substrate</name>
    </ligand>
</feature>
<feature type="binding site" evidence="2">
    <location>
        <position position="346"/>
    </location>
    <ligand>
        <name>substrate</name>
    </ligand>
</feature>
<feature type="binding site" evidence="2">
    <location>
        <position position="564"/>
    </location>
    <ligand>
        <name>substrate</name>
    </ligand>
</feature>
<feature type="glycosylation site" description="N-linked (GlcNAc...) asparagine" evidence="4">
    <location>
        <position position="56"/>
    </location>
</feature>
<feature type="glycosylation site" description="N-linked (GlcNAc...) asparagine" evidence="4">
    <location>
        <position position="70"/>
    </location>
</feature>
<feature type="glycosylation site" description="N-linked (GlcNAc...) asparagine" evidence="4">
    <location>
        <position position="97"/>
    </location>
</feature>
<feature type="glycosylation site" description="N-linked (GlcNAc...) asparagine" evidence="4">
    <location>
        <position position="166"/>
    </location>
</feature>
<feature type="glycosylation site" description="N-linked (GlcNAc...) asparagine" evidence="4">
    <location>
        <position position="242"/>
    </location>
</feature>
<feature type="glycosylation site" description="N-linked (GlcNAc...) asparagine" evidence="4">
    <location>
        <position position="261"/>
    </location>
</feature>
<feature type="glycosylation site" description="N-linked (GlcNAc...) asparagine" evidence="4">
    <location>
        <position position="305"/>
    </location>
</feature>
<feature type="glycosylation site" description="N-linked (GlcNAc...) asparagine" evidence="4">
    <location>
        <position position="361"/>
    </location>
</feature>
<feature type="glycosylation site" description="N-linked (GlcNAc...) asparagine" evidence="4">
    <location>
        <position position="395"/>
    </location>
</feature>
<feature type="glycosylation site" description="N-linked (GlcNAc...) asparagine" evidence="4">
    <location>
        <position position="513"/>
    </location>
</feature>
<feature type="glycosylation site" description="N-linked (GlcNAc...) asparagine" evidence="4">
    <location>
        <position position="537"/>
    </location>
</feature>
<dbReference type="EC" id="3.2.1.28" evidence="1"/>
<dbReference type="EMBL" id="AAFI02000055">
    <property type="protein sequence ID" value="EAL65721.1"/>
    <property type="molecule type" value="Genomic_DNA"/>
</dbReference>
<dbReference type="RefSeq" id="XP_639096.1">
    <property type="nucleotide sequence ID" value="XM_634004.1"/>
</dbReference>
<dbReference type="SMR" id="Q54QZ5"/>
<dbReference type="FunCoup" id="Q54QZ5">
    <property type="interactions" value="38"/>
</dbReference>
<dbReference type="STRING" id="44689.Q54QZ5"/>
<dbReference type="GlyCosmos" id="Q54QZ5">
    <property type="glycosylation" value="11 sites, No reported glycans"/>
</dbReference>
<dbReference type="GlyGen" id="Q54QZ5">
    <property type="glycosylation" value="11 sites"/>
</dbReference>
<dbReference type="PaxDb" id="44689-DDB0185541"/>
<dbReference type="EnsemblProtists" id="EAL65721">
    <property type="protein sequence ID" value="EAL65721"/>
    <property type="gene ID" value="DDB_G0283473"/>
</dbReference>
<dbReference type="GeneID" id="8624120"/>
<dbReference type="KEGG" id="ddi:DDB_G0283473"/>
<dbReference type="dictyBase" id="DDB_G0283473">
    <property type="gene designation" value="treh"/>
</dbReference>
<dbReference type="VEuPathDB" id="AmoebaDB:DDB_G0283473"/>
<dbReference type="eggNOG" id="KOG0602">
    <property type="taxonomic scope" value="Eukaryota"/>
</dbReference>
<dbReference type="HOGENOM" id="CLU_006451_4_0_1"/>
<dbReference type="InParanoid" id="Q54QZ5"/>
<dbReference type="OMA" id="RYWDASD"/>
<dbReference type="PhylomeDB" id="Q54QZ5"/>
<dbReference type="PRO" id="PR:Q54QZ5"/>
<dbReference type="Proteomes" id="UP000002195">
    <property type="component" value="Chromosome 4"/>
</dbReference>
<dbReference type="GO" id="GO:0004555">
    <property type="term" value="F:alpha,alpha-trehalase activity"/>
    <property type="evidence" value="ECO:0000250"/>
    <property type="project" value="UniProtKB"/>
</dbReference>
<dbReference type="GO" id="GO:0005993">
    <property type="term" value="P:trehalose catabolic process"/>
    <property type="evidence" value="ECO:0000250"/>
    <property type="project" value="UniProtKB"/>
</dbReference>
<dbReference type="Gene3D" id="1.50.10.10">
    <property type="match status" value="1"/>
</dbReference>
<dbReference type="InterPro" id="IPR008928">
    <property type="entry name" value="6-hairpin_glycosidase_sf"/>
</dbReference>
<dbReference type="InterPro" id="IPR012341">
    <property type="entry name" value="6hp_glycosidase-like_sf"/>
</dbReference>
<dbReference type="InterPro" id="IPR001661">
    <property type="entry name" value="Glyco_hydro_37"/>
</dbReference>
<dbReference type="PANTHER" id="PTHR23403">
    <property type="entry name" value="TREHALASE"/>
    <property type="match status" value="1"/>
</dbReference>
<dbReference type="PANTHER" id="PTHR23403:SF1">
    <property type="entry name" value="TREHALASE"/>
    <property type="match status" value="1"/>
</dbReference>
<dbReference type="Pfam" id="PF01204">
    <property type="entry name" value="Trehalase"/>
    <property type="match status" value="1"/>
</dbReference>
<dbReference type="PRINTS" id="PR00744">
    <property type="entry name" value="GLHYDRLASE37"/>
</dbReference>
<dbReference type="SUPFAM" id="SSF48208">
    <property type="entry name" value="Six-hairpin glycosidases"/>
    <property type="match status" value="1"/>
</dbReference>
<organism>
    <name type="scientific">Dictyostelium discoideum</name>
    <name type="common">Social amoeba</name>
    <dbReference type="NCBI Taxonomy" id="44689"/>
    <lineage>
        <taxon>Eukaryota</taxon>
        <taxon>Amoebozoa</taxon>
        <taxon>Evosea</taxon>
        <taxon>Eumycetozoa</taxon>
        <taxon>Dictyostelia</taxon>
        <taxon>Dictyosteliales</taxon>
        <taxon>Dictyosteliaceae</taxon>
        <taxon>Dictyostelium</taxon>
    </lineage>
</organism>
<accession>Q54QZ5</accession>
<keyword id="KW-0325">Glycoprotein</keyword>
<keyword id="KW-0326">Glycosidase</keyword>
<keyword id="KW-0378">Hydrolase</keyword>
<keyword id="KW-1185">Reference proteome</keyword>
<keyword id="KW-0732">Signal</keyword>
<evidence type="ECO:0000250" key="1">
    <source>
        <dbReference type="UniProtKB" id="O43280"/>
    </source>
</evidence>
<evidence type="ECO:0000250" key="2">
    <source>
        <dbReference type="UniProtKB" id="P13482"/>
    </source>
</evidence>
<evidence type="ECO:0000255" key="3"/>
<evidence type="ECO:0000255" key="4">
    <source>
        <dbReference type="PROSITE-ProRule" id="PRU00498"/>
    </source>
</evidence>
<evidence type="ECO:0000305" key="5"/>
<proteinExistence type="inferred from homology"/>
<gene>
    <name type="primary">treh</name>
    <name type="ORF">DDB_G0283473</name>
</gene>
<reference key="1">
    <citation type="journal article" date="2005" name="Nature">
        <title>The genome of the social amoeba Dictyostelium discoideum.</title>
        <authorList>
            <person name="Eichinger L."/>
            <person name="Pachebat J.A."/>
            <person name="Gloeckner G."/>
            <person name="Rajandream M.A."/>
            <person name="Sucgang R."/>
            <person name="Berriman M."/>
            <person name="Song J."/>
            <person name="Olsen R."/>
            <person name="Szafranski K."/>
            <person name="Xu Q."/>
            <person name="Tunggal B."/>
            <person name="Kummerfeld S."/>
            <person name="Madera M."/>
            <person name="Konfortov B.A."/>
            <person name="Rivero F."/>
            <person name="Bankier A.T."/>
            <person name="Lehmann R."/>
            <person name="Hamlin N."/>
            <person name="Davies R."/>
            <person name="Gaudet P."/>
            <person name="Fey P."/>
            <person name="Pilcher K."/>
            <person name="Chen G."/>
            <person name="Saunders D."/>
            <person name="Sodergren E.J."/>
            <person name="Davis P."/>
            <person name="Kerhornou A."/>
            <person name="Nie X."/>
            <person name="Hall N."/>
            <person name="Anjard C."/>
            <person name="Hemphill L."/>
            <person name="Bason N."/>
            <person name="Farbrother P."/>
            <person name="Desany B."/>
            <person name="Just E."/>
            <person name="Morio T."/>
            <person name="Rost R."/>
            <person name="Churcher C.M."/>
            <person name="Cooper J."/>
            <person name="Haydock S."/>
            <person name="van Driessche N."/>
            <person name="Cronin A."/>
            <person name="Goodhead I."/>
            <person name="Muzny D.M."/>
            <person name="Mourier T."/>
            <person name="Pain A."/>
            <person name="Lu M."/>
            <person name="Harper D."/>
            <person name="Lindsay R."/>
            <person name="Hauser H."/>
            <person name="James K.D."/>
            <person name="Quiles M."/>
            <person name="Madan Babu M."/>
            <person name="Saito T."/>
            <person name="Buchrieser C."/>
            <person name="Wardroper A."/>
            <person name="Felder M."/>
            <person name="Thangavelu M."/>
            <person name="Johnson D."/>
            <person name="Knights A."/>
            <person name="Loulseged H."/>
            <person name="Mungall K.L."/>
            <person name="Oliver K."/>
            <person name="Price C."/>
            <person name="Quail M.A."/>
            <person name="Urushihara H."/>
            <person name="Hernandez J."/>
            <person name="Rabbinowitsch E."/>
            <person name="Steffen D."/>
            <person name="Sanders M."/>
            <person name="Ma J."/>
            <person name="Kohara Y."/>
            <person name="Sharp S."/>
            <person name="Simmonds M.N."/>
            <person name="Spiegler S."/>
            <person name="Tivey A."/>
            <person name="Sugano S."/>
            <person name="White B."/>
            <person name="Walker D."/>
            <person name="Woodward J.R."/>
            <person name="Winckler T."/>
            <person name="Tanaka Y."/>
            <person name="Shaulsky G."/>
            <person name="Schleicher M."/>
            <person name="Weinstock G.M."/>
            <person name="Rosenthal A."/>
            <person name="Cox E.C."/>
            <person name="Chisholm R.L."/>
            <person name="Gibbs R.A."/>
            <person name="Loomis W.F."/>
            <person name="Platzer M."/>
            <person name="Kay R.R."/>
            <person name="Williams J.G."/>
            <person name="Dear P.H."/>
            <person name="Noegel A.A."/>
            <person name="Barrell B.G."/>
            <person name="Kuspa A."/>
        </authorList>
    </citation>
    <scope>NUCLEOTIDE SEQUENCE [LARGE SCALE GENOMIC DNA]</scope>
    <source>
        <strain>AX4</strain>
    </source>
</reference>
<sequence>MDFLNKKIQKILFICILSFLIVNLTKSEISEVKDVSKFLSVGGGGTGGCQHPIYCNGTLLKTIQLTQVFNDSKTFVDMPMRTSIENVNELFNQLLLNTSKNGGPNKEELAAFLSENFYPAGYEVEPVTPVDWVPNPSFLDEITDPNLVDFARSIHGKWLELTRVFNTSGLCDGCYSSIPVNNPFVIAGSRFREFYYWDSYWIIQGLLVSDMTTTAKGMLRNFGDMITEFGFIPNGGRIYYLNRSQPPLFTQMVNKYFEATNGSDIEFLQEILPILDQEYQWWMTHRTTELTNGETGESVILNLYNVSNNSPRPESYYEDFTDAQSFSSVEEKDYFYSSIASGAESGWDFSSRWMSPSDNTNLTTIQTVDVVPVDLNSILYLNEKILSSFHRTLGNNSMAVYYQAQSESRVDAMQQVFFNEDTYQWNDYNLKTSTNNEAWYTSNILPLFADIQSSIDMDNQEIDLIFKSLANVLIAYPGGVPTSLISAQSLQWDGLNVWPPLQYWIIESIMTPNTTFSNMIGKNLIDRWITTNFCGWNSTLESEGGMMFEKYNANYIGVPGGGGEYVVQNGFGWTNGVDLYLLKKYGKSITLNSC</sequence>
<protein>
    <recommendedName>
        <fullName evidence="5">Trehalase</fullName>
        <ecNumber evidence="1">3.2.1.28</ecNumber>
    </recommendedName>
    <alternativeName>
        <fullName>Alpha,alpha-trehalase</fullName>
    </alternativeName>
    <alternativeName>
        <fullName>Alpha,alpha-trehalose glucohydrolase</fullName>
    </alternativeName>
</protein>
<name>TREA_DICDI</name>
<comment type="catalytic activity">
    <reaction evidence="1">
        <text>alpha,alpha-trehalose + H2O = alpha-D-glucose + beta-D-glucose</text>
        <dbReference type="Rhea" id="RHEA:32675"/>
        <dbReference type="ChEBI" id="CHEBI:15377"/>
        <dbReference type="ChEBI" id="CHEBI:15903"/>
        <dbReference type="ChEBI" id="CHEBI:16551"/>
        <dbReference type="ChEBI" id="CHEBI:17925"/>
        <dbReference type="EC" id="3.2.1.28"/>
    </reaction>
</comment>
<comment type="similarity">
    <text evidence="5">Belongs to the glycosyl hydrolase 37 family.</text>
</comment>